<feature type="chain" id="PRO_0000379383" description="ATP-dependent helicase/deoxyribonuclease subunit B">
    <location>
        <begin position="1"/>
        <end position="1171"/>
    </location>
</feature>
<comment type="function">
    <text evidence="1">The heterodimer acts as both an ATP-dependent DNA helicase and an ATP-dependent, dual-direction single-stranded exonuclease. Recognizes the chi site generating a DNA molecule suitable for the initiation of homologous recombination. This subunit has 5' -&gt; 3' nuclease activity but not helicase activity.</text>
</comment>
<comment type="cofactor">
    <cofactor evidence="1">
        <name>Mg(2+)</name>
        <dbReference type="ChEBI" id="CHEBI:18420"/>
    </cofactor>
</comment>
<comment type="subunit">
    <text evidence="1">Heterodimer of AddA and RexB.</text>
</comment>
<comment type="miscellaneous">
    <text evidence="1">Despite having helicase-like domains, this subunit does not have helicase activity.</text>
</comment>
<comment type="similarity">
    <text evidence="1">Belongs to the helicase family. AddB/RexB type 2 subfamily.</text>
</comment>
<gene>
    <name evidence="1" type="primary">rexB</name>
    <name type="ordered locus">LCK_01148</name>
</gene>
<keyword id="KW-0067">ATP-binding</keyword>
<keyword id="KW-0227">DNA damage</keyword>
<keyword id="KW-0234">DNA repair</keyword>
<keyword id="KW-0238">DNA-binding</keyword>
<keyword id="KW-0269">Exonuclease</keyword>
<keyword id="KW-0347">Helicase</keyword>
<keyword id="KW-0378">Hydrolase</keyword>
<keyword id="KW-0540">Nuclease</keyword>
<keyword id="KW-0547">Nucleotide-binding</keyword>
<keyword id="KW-1185">Reference proteome</keyword>
<organism>
    <name type="scientific">Leuconostoc citreum (strain KM20)</name>
    <dbReference type="NCBI Taxonomy" id="349519"/>
    <lineage>
        <taxon>Bacteria</taxon>
        <taxon>Bacillati</taxon>
        <taxon>Bacillota</taxon>
        <taxon>Bacilli</taxon>
        <taxon>Lactobacillales</taxon>
        <taxon>Lactobacillaceae</taxon>
        <taxon>Leuconostoc</taxon>
    </lineage>
</organism>
<evidence type="ECO:0000255" key="1">
    <source>
        <dbReference type="HAMAP-Rule" id="MF_01453"/>
    </source>
</evidence>
<name>ADDB_LEUCK</name>
<accession>B1MZM3</accession>
<sequence length="1171" mass="132448">MSLTVYMNHGQIDMRHALLSHAHEALNQDNNLTVYYIVPNHVKFDSEVDVLRRFARLTGQNPDTSLYAQSRLQVYSLSRLTWALLKDMATMQPNVIQGTGLFIMVSDILRDYAAQLPIFARMQSKAGFVTTLVAQLVELRASRISPEDLLTILNQESDDDTFLRQTLSGKLRDLAIVADALDKKMGHTYITQQEVLSFFATQLATTQLKNVAFYFDGFNGFTSPETQVMIELMARYPVTVALLGDVEKLGSQQPGDLFYKPMTTAQRLAQFTKIANQQVVWQVPTQARCLDESIISVMSAWEKLGEYRQFNSENKKTNLAAFVAENTMVEIQEVARRIRQLLVAQPDLRLRDILILARDLTPYTGHIPEVMQQFDLPYFLDTDQKMTNHPLVELLLNLLRPAKERFQYQQVMAILKTGLLRPYTDGSLVPEGDFFDIVSYLDNYLYANQPFERTWRDLDHPFTLFTVSEDEDDEDARVVLDDKTVNRRIETLRRFVIDAFDSLQQQLNQAQTMRQAATLIILWLEKYHVTEAILSQRDTLLAAGELSRSREGEEVWEMMTQTLDDIVAIDGDERFELEKFKAILVAGFEGATFSGIPNNLDQLTISEAGIVQSNDYQYLFFIGGTRNNLPAQLKSRALINDAERLIVQPALQENSTPKYLQNTAQQQMAEENLLFYGALTAATKNIVLSYPALDAGGQISDMSPFFKRLVDAFNITVNKVTATPATSQALLKYYVGSVRSTLGELVKIAASQQQTSAYQALRNTINQSEPERLERVLSAPNYKNQTETLKPELVQALFGETLNMSISQLESYYNNPLAYFLQYGLALKERLTNRLNVAQTGTLYHAVFEGVVQQLIIQQLSLRDISQKALQQLVADNMAEITAQPAYQMLQETGKMRATQHYLAKVSEILAVNMQRAARVNHAQPKAVERLFGFPNRQSLPALVVSTPQATVHLRGKIDRLDSQDPSQVYGTIIDYKSNGKHFDWGQAYDGRQMQLLTYWQAAQLSAEQLGIEAIGGAFFAKIAPEKLTIKDFKGDVRAMLRGEIKPEQFKYRGLFISEPAYIDSLETLAEGEGSQFYQLKKKANGELYANSDVISPEDFELLLKRNLDNIQRASAAILSGDFPLSPAEGSLQFTPFTDVLRFDRALGDQYKNNTPKNKSDILKLLKADEE</sequence>
<protein>
    <recommendedName>
        <fullName evidence="1">ATP-dependent helicase/deoxyribonuclease subunit B</fullName>
        <ecNumber evidence="1">3.1.-.-</ecNumber>
    </recommendedName>
    <alternativeName>
        <fullName evidence="1">ATP-dependent helicase/nuclease subunit RexB</fullName>
    </alternativeName>
</protein>
<dbReference type="EC" id="3.1.-.-" evidence="1"/>
<dbReference type="EMBL" id="DQ489736">
    <property type="protein sequence ID" value="ACA82975.1"/>
    <property type="molecule type" value="Genomic_DNA"/>
</dbReference>
<dbReference type="RefSeq" id="WP_004908913.1">
    <property type="nucleotide sequence ID" value="NC_010471.1"/>
</dbReference>
<dbReference type="SMR" id="B1MZM3"/>
<dbReference type="STRING" id="349519.LCK_01148"/>
<dbReference type="KEGG" id="lci:LCK_01148"/>
<dbReference type="eggNOG" id="COG3857">
    <property type="taxonomic scope" value="Bacteria"/>
</dbReference>
<dbReference type="HOGENOM" id="CLU_007838_0_0_9"/>
<dbReference type="OrthoDB" id="9758506at2"/>
<dbReference type="Proteomes" id="UP000002166">
    <property type="component" value="Chromosome"/>
</dbReference>
<dbReference type="GO" id="GO:0008409">
    <property type="term" value="F:5'-3' exonuclease activity"/>
    <property type="evidence" value="ECO:0007669"/>
    <property type="project" value="UniProtKB-UniRule"/>
</dbReference>
<dbReference type="GO" id="GO:0005524">
    <property type="term" value="F:ATP binding"/>
    <property type="evidence" value="ECO:0007669"/>
    <property type="project" value="UniProtKB-UniRule"/>
</dbReference>
<dbReference type="GO" id="GO:0003690">
    <property type="term" value="F:double-stranded DNA binding"/>
    <property type="evidence" value="ECO:0007669"/>
    <property type="project" value="UniProtKB-UniRule"/>
</dbReference>
<dbReference type="GO" id="GO:0004386">
    <property type="term" value="F:helicase activity"/>
    <property type="evidence" value="ECO:0007669"/>
    <property type="project" value="UniProtKB-KW"/>
</dbReference>
<dbReference type="GO" id="GO:0016817">
    <property type="term" value="F:hydrolase activity, acting on acid anhydrides"/>
    <property type="evidence" value="ECO:0007669"/>
    <property type="project" value="InterPro"/>
</dbReference>
<dbReference type="GO" id="GO:0000724">
    <property type="term" value="P:double-strand break repair via homologous recombination"/>
    <property type="evidence" value="ECO:0007669"/>
    <property type="project" value="UniProtKB-UniRule"/>
</dbReference>
<dbReference type="Gene3D" id="3.90.320.10">
    <property type="match status" value="1"/>
</dbReference>
<dbReference type="Gene3D" id="3.40.50.300">
    <property type="entry name" value="P-loop containing nucleotide triphosphate hydrolases"/>
    <property type="match status" value="4"/>
</dbReference>
<dbReference type="HAMAP" id="MF_01453">
    <property type="entry name" value="AddB_type2"/>
    <property type="match status" value="1"/>
</dbReference>
<dbReference type="InterPro" id="IPR049035">
    <property type="entry name" value="ADDB_N"/>
</dbReference>
<dbReference type="InterPro" id="IPR014141">
    <property type="entry name" value="DNA_helicase_suRexB"/>
</dbReference>
<dbReference type="InterPro" id="IPR027417">
    <property type="entry name" value="P-loop_NTPase"/>
</dbReference>
<dbReference type="InterPro" id="IPR011604">
    <property type="entry name" value="PDDEXK-like_dom_sf"/>
</dbReference>
<dbReference type="InterPro" id="IPR038726">
    <property type="entry name" value="PDDEXK_AddAB-type"/>
</dbReference>
<dbReference type="PANTHER" id="PTHR30591">
    <property type="entry name" value="RECBCD ENZYME SUBUNIT RECC"/>
    <property type="match status" value="1"/>
</dbReference>
<dbReference type="PANTHER" id="PTHR30591:SF1">
    <property type="entry name" value="RECBCD ENZYME SUBUNIT RECC"/>
    <property type="match status" value="1"/>
</dbReference>
<dbReference type="Pfam" id="PF21445">
    <property type="entry name" value="ADDB_N"/>
    <property type="match status" value="1"/>
</dbReference>
<dbReference type="Pfam" id="PF12705">
    <property type="entry name" value="PDDEXK_1"/>
    <property type="match status" value="1"/>
</dbReference>
<dbReference type="SUPFAM" id="SSF52540">
    <property type="entry name" value="P-loop containing nucleoside triphosphate hydrolases"/>
    <property type="match status" value="1"/>
</dbReference>
<reference key="1">
    <citation type="journal article" date="2008" name="J. Bacteriol.">
        <title>Complete genome sequence of Leuconostoc citreum KM20.</title>
        <authorList>
            <person name="Kim J.F."/>
            <person name="Jeong H."/>
            <person name="Lee J.-S."/>
            <person name="Choi S.-H."/>
            <person name="Ha M."/>
            <person name="Hur C.-G."/>
            <person name="Kim J.-S."/>
            <person name="Lee S."/>
            <person name="Park H.-S."/>
            <person name="Park Y.-H."/>
            <person name="Oh T.K."/>
        </authorList>
    </citation>
    <scope>NUCLEOTIDE SEQUENCE [LARGE SCALE GENOMIC DNA]</scope>
    <source>
        <strain>KM20</strain>
    </source>
</reference>
<proteinExistence type="inferred from homology"/>